<proteinExistence type="inferred from homology"/>
<keyword id="KW-0378">Hydrolase</keyword>
<keyword id="KW-0546">Nucleotide metabolism</keyword>
<keyword id="KW-0547">Nucleotide-binding</keyword>
<accession>B6J3W2</accession>
<protein>
    <recommendedName>
        <fullName evidence="1">dCTP deaminase</fullName>
        <ecNumber evidence="1">3.5.4.13</ecNumber>
    </recommendedName>
    <alternativeName>
        <fullName evidence="1">Deoxycytidine triphosphate deaminase</fullName>
    </alternativeName>
</protein>
<name>DCD_COXB2</name>
<reference key="1">
    <citation type="journal article" date="2009" name="Infect. Immun.">
        <title>Comparative genomics reveal extensive transposon-mediated genomic plasticity and diversity among potential effector proteins within the genus Coxiella.</title>
        <authorList>
            <person name="Beare P.A."/>
            <person name="Unsworth N."/>
            <person name="Andoh M."/>
            <person name="Voth D.E."/>
            <person name="Omsland A."/>
            <person name="Gilk S.D."/>
            <person name="Williams K.P."/>
            <person name="Sobral B.W."/>
            <person name="Kupko J.J. III"/>
            <person name="Porcella S.F."/>
            <person name="Samuel J.E."/>
            <person name="Heinzen R.A."/>
        </authorList>
    </citation>
    <scope>NUCLEOTIDE SEQUENCE [LARGE SCALE GENOMIC DNA]</scope>
    <source>
        <strain>CbuG_Q212</strain>
    </source>
</reference>
<sequence length="188" mass="21135">MPIKSDKWIRRMAESHQLIYPFEPKQVRETPSGKVISYGTSSYGYDVRCADEFKIFTNINASIVDPKNFDPNGFIDLKANVCIIPPNSFVLARTVEYFKIPRNILTICLGKSTYARCGIIVNVTPLEPEWEGHVTLEFSNTTNLPAKIYANEGVAQMLFLESDEVCDISYKDRGGKYQGQKGVTLPVA</sequence>
<evidence type="ECO:0000255" key="1">
    <source>
        <dbReference type="HAMAP-Rule" id="MF_00146"/>
    </source>
</evidence>
<dbReference type="EC" id="3.5.4.13" evidence="1"/>
<dbReference type="EMBL" id="CP001019">
    <property type="protein sequence ID" value="ACJ17769.1"/>
    <property type="molecule type" value="Genomic_DNA"/>
</dbReference>
<dbReference type="RefSeq" id="WP_005770557.1">
    <property type="nucleotide sequence ID" value="NC_011527.1"/>
</dbReference>
<dbReference type="SMR" id="B6J3W2"/>
<dbReference type="KEGG" id="cbg:CbuG_0334"/>
<dbReference type="HOGENOM" id="CLU_087476_4_0_6"/>
<dbReference type="UniPathway" id="UPA00610">
    <property type="reaction ID" value="UER00665"/>
</dbReference>
<dbReference type="GO" id="GO:0008829">
    <property type="term" value="F:dCTP deaminase activity"/>
    <property type="evidence" value="ECO:0007669"/>
    <property type="project" value="UniProtKB-UniRule"/>
</dbReference>
<dbReference type="GO" id="GO:0000166">
    <property type="term" value="F:nucleotide binding"/>
    <property type="evidence" value="ECO:0007669"/>
    <property type="project" value="UniProtKB-KW"/>
</dbReference>
<dbReference type="GO" id="GO:0006226">
    <property type="term" value="P:dUMP biosynthetic process"/>
    <property type="evidence" value="ECO:0007669"/>
    <property type="project" value="UniProtKB-UniPathway"/>
</dbReference>
<dbReference type="GO" id="GO:0006229">
    <property type="term" value="P:dUTP biosynthetic process"/>
    <property type="evidence" value="ECO:0007669"/>
    <property type="project" value="UniProtKB-UniRule"/>
</dbReference>
<dbReference type="GO" id="GO:0015949">
    <property type="term" value="P:nucleobase-containing small molecule interconversion"/>
    <property type="evidence" value="ECO:0007669"/>
    <property type="project" value="TreeGrafter"/>
</dbReference>
<dbReference type="CDD" id="cd07557">
    <property type="entry name" value="trimeric_dUTPase"/>
    <property type="match status" value="1"/>
</dbReference>
<dbReference type="FunFam" id="2.70.40.10:FF:000001">
    <property type="entry name" value="dCTP deaminase"/>
    <property type="match status" value="1"/>
</dbReference>
<dbReference type="Gene3D" id="2.70.40.10">
    <property type="match status" value="1"/>
</dbReference>
<dbReference type="HAMAP" id="MF_00146">
    <property type="entry name" value="dCTP_deaminase"/>
    <property type="match status" value="1"/>
</dbReference>
<dbReference type="InterPro" id="IPR011962">
    <property type="entry name" value="dCTP_deaminase"/>
</dbReference>
<dbReference type="InterPro" id="IPR036157">
    <property type="entry name" value="dUTPase-like_sf"/>
</dbReference>
<dbReference type="InterPro" id="IPR033704">
    <property type="entry name" value="dUTPase_trimeric"/>
</dbReference>
<dbReference type="NCBIfam" id="TIGR02274">
    <property type="entry name" value="dCTP_deam"/>
    <property type="match status" value="1"/>
</dbReference>
<dbReference type="PANTHER" id="PTHR42680">
    <property type="entry name" value="DCTP DEAMINASE"/>
    <property type="match status" value="1"/>
</dbReference>
<dbReference type="PANTHER" id="PTHR42680:SF3">
    <property type="entry name" value="DCTP DEAMINASE"/>
    <property type="match status" value="1"/>
</dbReference>
<dbReference type="Pfam" id="PF22769">
    <property type="entry name" value="DCD"/>
    <property type="match status" value="1"/>
</dbReference>
<dbReference type="SUPFAM" id="SSF51283">
    <property type="entry name" value="dUTPase-like"/>
    <property type="match status" value="1"/>
</dbReference>
<comment type="function">
    <text evidence="1">Catalyzes the deamination of dCTP to dUTP.</text>
</comment>
<comment type="catalytic activity">
    <reaction evidence="1">
        <text>dCTP + H2O + H(+) = dUTP + NH4(+)</text>
        <dbReference type="Rhea" id="RHEA:22680"/>
        <dbReference type="ChEBI" id="CHEBI:15377"/>
        <dbReference type="ChEBI" id="CHEBI:15378"/>
        <dbReference type="ChEBI" id="CHEBI:28938"/>
        <dbReference type="ChEBI" id="CHEBI:61481"/>
        <dbReference type="ChEBI" id="CHEBI:61555"/>
        <dbReference type="EC" id="3.5.4.13"/>
    </reaction>
</comment>
<comment type="pathway">
    <text evidence="1">Pyrimidine metabolism; dUMP biosynthesis; dUMP from dCTP (dUTP route): step 1/2.</text>
</comment>
<comment type="subunit">
    <text evidence="1">Homotrimer.</text>
</comment>
<comment type="similarity">
    <text evidence="1">Belongs to the dCTP deaminase family.</text>
</comment>
<organism>
    <name type="scientific">Coxiella burnetii (strain CbuG_Q212)</name>
    <name type="common">Coxiella burnetii (strain Q212)</name>
    <dbReference type="NCBI Taxonomy" id="434923"/>
    <lineage>
        <taxon>Bacteria</taxon>
        <taxon>Pseudomonadati</taxon>
        <taxon>Pseudomonadota</taxon>
        <taxon>Gammaproteobacteria</taxon>
        <taxon>Legionellales</taxon>
        <taxon>Coxiellaceae</taxon>
        <taxon>Coxiella</taxon>
    </lineage>
</organism>
<feature type="chain" id="PRO_1000096419" description="dCTP deaminase">
    <location>
        <begin position="1"/>
        <end position="188"/>
    </location>
</feature>
<feature type="active site" description="Proton donor/acceptor" evidence="1">
    <location>
        <position position="137"/>
    </location>
</feature>
<feature type="binding site" evidence="1">
    <location>
        <begin position="111"/>
        <end position="116"/>
    </location>
    <ligand>
        <name>dCTP</name>
        <dbReference type="ChEBI" id="CHEBI:61481"/>
    </ligand>
</feature>
<feature type="binding site" evidence="1">
    <location>
        <begin position="135"/>
        <end position="137"/>
    </location>
    <ligand>
        <name>dCTP</name>
        <dbReference type="ChEBI" id="CHEBI:61481"/>
    </ligand>
</feature>
<feature type="binding site" evidence="1">
    <location>
        <position position="156"/>
    </location>
    <ligand>
        <name>dCTP</name>
        <dbReference type="ChEBI" id="CHEBI:61481"/>
    </ligand>
</feature>
<feature type="binding site" evidence="1">
    <location>
        <position position="170"/>
    </location>
    <ligand>
        <name>dCTP</name>
        <dbReference type="ChEBI" id="CHEBI:61481"/>
    </ligand>
</feature>
<feature type="binding site" evidence="1">
    <location>
        <position position="180"/>
    </location>
    <ligand>
        <name>dCTP</name>
        <dbReference type="ChEBI" id="CHEBI:61481"/>
    </ligand>
</feature>
<gene>
    <name evidence="1" type="primary">dcd</name>
    <name type="ordered locus">CbuG_0334</name>
</gene>